<dbReference type="EMBL" id="BC097409">
    <property type="protein sequence ID" value="AAH97409.1"/>
    <property type="molecule type" value="mRNA"/>
</dbReference>
<dbReference type="RefSeq" id="NP_001020836.1">
    <property type="nucleotide sequence ID" value="NM_001025665.1"/>
</dbReference>
<dbReference type="RefSeq" id="XP_063127386.1">
    <property type="nucleotide sequence ID" value="XM_063271316.1"/>
</dbReference>
<dbReference type="RefSeq" id="XP_063127387.1">
    <property type="nucleotide sequence ID" value="XM_063271317.1"/>
</dbReference>
<dbReference type="RefSeq" id="XP_063127388.1">
    <property type="nucleotide sequence ID" value="XM_063271318.1"/>
</dbReference>
<dbReference type="SMR" id="Q4V8F7"/>
<dbReference type="FunCoup" id="Q4V8F7">
    <property type="interactions" value="5"/>
</dbReference>
<dbReference type="STRING" id="10116.ENSRNOP00000043589"/>
<dbReference type="PhosphoSitePlus" id="Q4V8F7"/>
<dbReference type="Ensembl" id="ENSRNOT00000046604.6">
    <property type="protein sequence ID" value="ENSRNOP00000043589.6"/>
    <property type="gene ID" value="ENSRNOG00000034266.6"/>
</dbReference>
<dbReference type="GeneID" id="304484"/>
<dbReference type="KEGG" id="rno:304484"/>
<dbReference type="UCSC" id="RGD:1562334">
    <property type="organism name" value="rat"/>
</dbReference>
<dbReference type="AGR" id="RGD:1562334"/>
<dbReference type="CTD" id="160762"/>
<dbReference type="RGD" id="1562334">
    <property type="gene designation" value="Ccdc63"/>
</dbReference>
<dbReference type="GeneTree" id="ENSGT00940000153116"/>
<dbReference type="InParanoid" id="Q4V8F7"/>
<dbReference type="PhylomeDB" id="Q4V8F7"/>
<dbReference type="PRO" id="PR:Q4V8F7"/>
<dbReference type="Proteomes" id="UP000002494">
    <property type="component" value="Chromosome 12"/>
</dbReference>
<dbReference type="GO" id="GO:0005930">
    <property type="term" value="C:axoneme"/>
    <property type="evidence" value="ECO:0000318"/>
    <property type="project" value="GO_Central"/>
</dbReference>
<dbReference type="GO" id="GO:0003341">
    <property type="term" value="P:cilium movement"/>
    <property type="evidence" value="ECO:0000318"/>
    <property type="project" value="GO_Central"/>
</dbReference>
<dbReference type="GO" id="GO:0036158">
    <property type="term" value="P:outer dynein arm assembly"/>
    <property type="evidence" value="ECO:0000318"/>
    <property type="project" value="GO_Central"/>
</dbReference>
<dbReference type="GO" id="GO:0007286">
    <property type="term" value="P:spermatid development"/>
    <property type="evidence" value="ECO:0000250"/>
    <property type="project" value="UniProtKB"/>
</dbReference>
<dbReference type="InterPro" id="IPR051876">
    <property type="entry name" value="ODA-DC/CCD"/>
</dbReference>
<dbReference type="InterPro" id="IPR049258">
    <property type="entry name" value="ODAD1_CC"/>
</dbReference>
<dbReference type="PANTHER" id="PTHR21694">
    <property type="entry name" value="COILED-COIL DOMAIN-CONTAINING PROTEIN 63"/>
    <property type="match status" value="1"/>
</dbReference>
<dbReference type="PANTHER" id="PTHR21694:SF18">
    <property type="entry name" value="COILED-COIL DOMAIN-CONTAINING PROTEIN 63"/>
    <property type="match status" value="1"/>
</dbReference>
<dbReference type="Pfam" id="PF21773">
    <property type="entry name" value="ODAD1_CC"/>
    <property type="match status" value="1"/>
</dbReference>
<feature type="chain" id="PRO_0000288876" description="Coiled-coil domain-containing protein 63">
    <location>
        <begin position="1"/>
        <end position="559"/>
    </location>
</feature>
<feature type="coiled-coil region" evidence="2">
    <location>
        <begin position="14"/>
        <end position="70"/>
    </location>
</feature>
<feature type="coiled-coil region" evidence="2">
    <location>
        <begin position="185"/>
        <end position="261"/>
    </location>
</feature>
<feature type="coiled-coil region" evidence="2">
    <location>
        <begin position="364"/>
        <end position="414"/>
    </location>
</feature>
<sequence>MKKHRRKVSEPLPELSEKAKEQLAEAELRKLRQQFRKMVDSRKSSNFRNQRMIASQYKEIENLKAEQAETTLLLSLVKSPKNLDLNQKNFTELRFLLQTKGDYEALISSMKVLLGELDDKIVQMERKITNQRQIFLKTQEANNPRKLQKQIHILETRLNLVTVHFDTMLTSNAQLRKDIEDLLFEKAAYDHVYQQLQRRLQTQKKTMNVAIEQSTQAYEQRVEAMARMAAMKDRQQKDISQYNLEIRELERLYDHENKLKSFLLVKLNDRTEFEDQAKKQEAVKIKKHGKKRKGESFESYEVAHLRLLKLAENGDLNQLTEDFLAKEEKNFARFTYVTELNNDMETMHKRTQRIQDDIINLRSQQQSSHEGTRNILKQMEEKLRKTTEDTDIYENRYREMSKTLEYLKNSVEKLFKKINCNATEILGKLGETGKITDSNLQQYFAIIEKKTNDLLLLESFRRLQEAEGPDVDVPQPFVNPFWGGSALLKPPEPLRVVPPVFGADSFSDKVEEVPHRALSWVQWNTLWTTVASGSWSWRTTFRRNEEKNHRRHCWRRGTR</sequence>
<organism>
    <name type="scientific">Rattus norvegicus</name>
    <name type="common">Rat</name>
    <dbReference type="NCBI Taxonomy" id="10116"/>
    <lineage>
        <taxon>Eukaryota</taxon>
        <taxon>Metazoa</taxon>
        <taxon>Chordata</taxon>
        <taxon>Craniata</taxon>
        <taxon>Vertebrata</taxon>
        <taxon>Euteleostomi</taxon>
        <taxon>Mammalia</taxon>
        <taxon>Eutheria</taxon>
        <taxon>Euarchontoglires</taxon>
        <taxon>Glires</taxon>
        <taxon>Rodentia</taxon>
        <taxon>Myomorpha</taxon>
        <taxon>Muroidea</taxon>
        <taxon>Muridae</taxon>
        <taxon>Murinae</taxon>
        <taxon>Rattus</taxon>
    </lineage>
</organism>
<proteinExistence type="evidence at transcript level"/>
<keyword id="KW-0175">Coiled coil</keyword>
<keyword id="KW-0221">Differentiation</keyword>
<keyword id="KW-1185">Reference proteome</keyword>
<keyword id="KW-0744">Spermatogenesis</keyword>
<gene>
    <name evidence="3" type="primary">Ccdc63</name>
</gene>
<protein>
    <recommendedName>
        <fullName evidence="3">Coiled-coil domain-containing protein 63</fullName>
    </recommendedName>
</protein>
<accession>Q4V8F7</accession>
<evidence type="ECO:0000250" key="1">
    <source>
        <dbReference type="UniProtKB" id="Q8CDV6"/>
    </source>
</evidence>
<evidence type="ECO:0000255" key="2"/>
<evidence type="ECO:0000312" key="3">
    <source>
        <dbReference type="RGD" id="1562334"/>
    </source>
</evidence>
<reference key="1">
    <citation type="journal article" date="2004" name="Genome Res.">
        <title>The status, quality, and expansion of the NIH full-length cDNA project: the Mammalian Gene Collection (MGC).</title>
        <authorList>
            <consortium name="The MGC Project Team"/>
        </authorList>
    </citation>
    <scope>NUCLEOTIDE SEQUENCE [LARGE SCALE MRNA]</scope>
    <source>
        <tissue>Testis</tissue>
    </source>
</reference>
<name>CCD63_RAT</name>
<comment type="function">
    <text evidence="1">Plays a role in spermiogenesis. Involved in the elongation of flagella and the formation of sperm heads.</text>
</comment>